<proteinExistence type="inferred from homology"/>
<sequence length="100" mass="11214">MLGSPLREYELLVSLGSEFEPEAESRVRSLFTPVEPEGVTVKHLDVLGIRKFAYEIKGRNDGVCVVVRFLANAGSIAEIGRQMRLTEDVIRTKLLRVGRK</sequence>
<organism>
    <name type="scientific">Tropheryma whipplei (strain Twist)</name>
    <name type="common">Whipple's bacillus</name>
    <dbReference type="NCBI Taxonomy" id="203267"/>
    <lineage>
        <taxon>Bacteria</taxon>
        <taxon>Bacillati</taxon>
        <taxon>Actinomycetota</taxon>
        <taxon>Actinomycetes</taxon>
        <taxon>Micrococcales</taxon>
        <taxon>Tropherymataceae</taxon>
        <taxon>Tropheryma</taxon>
    </lineage>
</organism>
<accession>Q83GX2</accession>
<dbReference type="EMBL" id="AE014184">
    <property type="protein sequence ID" value="AAO44205.1"/>
    <property type="status" value="ALT_INIT"/>
    <property type="molecule type" value="Genomic_DNA"/>
</dbReference>
<dbReference type="SMR" id="Q83GX2"/>
<dbReference type="STRING" id="203267.TWT_108"/>
<dbReference type="KEGG" id="twh:TWT_108"/>
<dbReference type="eggNOG" id="COG0360">
    <property type="taxonomic scope" value="Bacteria"/>
</dbReference>
<dbReference type="HOGENOM" id="CLU_1712472_0_0_11"/>
<dbReference type="OrthoDB" id="9812702at2"/>
<dbReference type="Proteomes" id="UP000002200">
    <property type="component" value="Chromosome"/>
</dbReference>
<dbReference type="GO" id="GO:1990904">
    <property type="term" value="C:ribonucleoprotein complex"/>
    <property type="evidence" value="ECO:0007669"/>
    <property type="project" value="UniProtKB-KW"/>
</dbReference>
<dbReference type="GO" id="GO:0005840">
    <property type="term" value="C:ribosome"/>
    <property type="evidence" value="ECO:0007669"/>
    <property type="project" value="UniProtKB-KW"/>
</dbReference>
<dbReference type="GO" id="GO:0019843">
    <property type="term" value="F:rRNA binding"/>
    <property type="evidence" value="ECO:0007669"/>
    <property type="project" value="UniProtKB-UniRule"/>
</dbReference>
<dbReference type="GO" id="GO:0003735">
    <property type="term" value="F:structural constituent of ribosome"/>
    <property type="evidence" value="ECO:0007669"/>
    <property type="project" value="InterPro"/>
</dbReference>
<dbReference type="GO" id="GO:0006412">
    <property type="term" value="P:translation"/>
    <property type="evidence" value="ECO:0007669"/>
    <property type="project" value="UniProtKB-UniRule"/>
</dbReference>
<dbReference type="CDD" id="cd00473">
    <property type="entry name" value="bS6"/>
    <property type="match status" value="1"/>
</dbReference>
<dbReference type="Gene3D" id="3.30.70.60">
    <property type="match status" value="1"/>
</dbReference>
<dbReference type="HAMAP" id="MF_00360">
    <property type="entry name" value="Ribosomal_bS6"/>
    <property type="match status" value="1"/>
</dbReference>
<dbReference type="InterPro" id="IPR000529">
    <property type="entry name" value="Ribosomal_bS6"/>
</dbReference>
<dbReference type="InterPro" id="IPR035980">
    <property type="entry name" value="Ribosomal_bS6_sf"/>
</dbReference>
<dbReference type="InterPro" id="IPR020814">
    <property type="entry name" value="Ribosomal_S6_plastid/chlpt"/>
</dbReference>
<dbReference type="InterPro" id="IPR014717">
    <property type="entry name" value="Transl_elong_EF1B/ribsomal_bS6"/>
</dbReference>
<dbReference type="NCBIfam" id="TIGR00166">
    <property type="entry name" value="S6"/>
    <property type="match status" value="1"/>
</dbReference>
<dbReference type="Pfam" id="PF01250">
    <property type="entry name" value="Ribosomal_S6"/>
    <property type="match status" value="1"/>
</dbReference>
<dbReference type="SUPFAM" id="SSF54995">
    <property type="entry name" value="Ribosomal protein S6"/>
    <property type="match status" value="1"/>
</dbReference>
<reference key="1">
    <citation type="journal article" date="2003" name="Genome Res.">
        <title>Tropheryma whipplei twist: a human pathogenic Actinobacteria with a reduced genome.</title>
        <authorList>
            <person name="Raoult D."/>
            <person name="Ogata H."/>
            <person name="Audic S."/>
            <person name="Robert C."/>
            <person name="Suhre K."/>
            <person name="Drancourt M."/>
            <person name="Claverie J.-M."/>
        </authorList>
    </citation>
    <scope>NUCLEOTIDE SEQUENCE [LARGE SCALE GENOMIC DNA]</scope>
    <source>
        <strain>Twist</strain>
    </source>
</reference>
<evidence type="ECO:0000255" key="1">
    <source>
        <dbReference type="HAMAP-Rule" id="MF_00360"/>
    </source>
</evidence>
<evidence type="ECO:0000305" key="2"/>
<protein>
    <recommendedName>
        <fullName evidence="1">Small ribosomal subunit protein bS6</fullName>
    </recommendedName>
    <alternativeName>
        <fullName evidence="2">30S ribosomal protein S6</fullName>
    </alternativeName>
</protein>
<comment type="function">
    <text evidence="1">Binds together with bS18 to 16S ribosomal RNA.</text>
</comment>
<comment type="similarity">
    <text evidence="1">Belongs to the bacterial ribosomal protein bS6 family.</text>
</comment>
<comment type="sequence caution" evidence="2">
    <conflict type="erroneous initiation">
        <sequence resource="EMBL-CDS" id="AAO44205"/>
    </conflict>
</comment>
<keyword id="KW-1185">Reference proteome</keyword>
<keyword id="KW-0687">Ribonucleoprotein</keyword>
<keyword id="KW-0689">Ribosomal protein</keyword>
<keyword id="KW-0694">RNA-binding</keyword>
<keyword id="KW-0699">rRNA-binding</keyword>
<name>RS6_TROWT</name>
<feature type="chain" id="PRO_0000176869" description="Small ribosomal subunit protein bS6">
    <location>
        <begin position="1"/>
        <end position="100"/>
    </location>
</feature>
<gene>
    <name evidence="1" type="primary">rpsF</name>
    <name type="ordered locus">TWT_108</name>
</gene>